<sequence length="245" mass="28146">MANQKKKEMVHDFQQKFTDKMKSLGLHFKNIDLYQQAFSHSSFINDFNMNRLEHNERLEFLGDAVLELTVSRYLFDRHPHLPEGNLTKMRATIVCEPSLVIFANKIKLNELILLGKGEEKTGGRTRPSLISDAFEAFVGALYLDQGLDTVWTFAEKVIFPYVEDDELVGVVDFKTQFQEYVHSQNKGDVTYQLIKEEGPAHHRLFTSEVILENKAVAEGKGKTKKESEQKAAEQAYKLMKNKKSL</sequence>
<proteinExistence type="inferred from homology"/>
<protein>
    <recommendedName>
        <fullName evidence="1">Ribonuclease 3</fullName>
        <ecNumber evidence="1">3.1.26.3</ecNumber>
    </recommendedName>
    <alternativeName>
        <fullName evidence="1">Ribonuclease III</fullName>
        <shortName evidence="1">RNase III</shortName>
    </alternativeName>
</protein>
<comment type="function">
    <text evidence="1">Digests double-stranded RNA. Involved in the processing of primary rRNA transcript to yield the immediate precursors to the large and small rRNAs (23S and 16S). Processes some mRNAs, and tRNAs when they are encoded in the rRNA operon. Processes pre-crRNA and tracrRNA of type II CRISPR loci if present in the organism.</text>
</comment>
<comment type="catalytic activity">
    <reaction evidence="1">
        <text>Endonucleolytic cleavage to 5'-phosphomonoester.</text>
        <dbReference type="EC" id="3.1.26.3"/>
    </reaction>
</comment>
<comment type="cofactor">
    <cofactor evidence="1">
        <name>Mg(2+)</name>
        <dbReference type="ChEBI" id="CHEBI:18420"/>
    </cofactor>
</comment>
<comment type="subunit">
    <text evidence="1">Homodimer.</text>
</comment>
<comment type="subcellular location">
    <subcellularLocation>
        <location evidence="1">Cytoplasm</location>
    </subcellularLocation>
</comment>
<comment type="similarity">
    <text evidence="1">Belongs to the ribonuclease III family.</text>
</comment>
<accession>Q5HPV8</accession>
<evidence type="ECO:0000255" key="1">
    <source>
        <dbReference type="HAMAP-Rule" id="MF_00104"/>
    </source>
</evidence>
<gene>
    <name evidence="1" type="primary">rnc</name>
    <name type="ordered locus">SERP0799</name>
</gene>
<keyword id="KW-0963">Cytoplasm</keyword>
<keyword id="KW-0255">Endonuclease</keyword>
<keyword id="KW-0378">Hydrolase</keyword>
<keyword id="KW-0460">Magnesium</keyword>
<keyword id="KW-0479">Metal-binding</keyword>
<keyword id="KW-0507">mRNA processing</keyword>
<keyword id="KW-0540">Nuclease</keyword>
<keyword id="KW-1185">Reference proteome</keyword>
<keyword id="KW-0694">RNA-binding</keyword>
<keyword id="KW-0698">rRNA processing</keyword>
<keyword id="KW-0699">rRNA-binding</keyword>
<keyword id="KW-0819">tRNA processing</keyword>
<reference key="1">
    <citation type="journal article" date="2005" name="J. Bacteriol.">
        <title>Insights on evolution of virulence and resistance from the complete genome analysis of an early methicillin-resistant Staphylococcus aureus strain and a biofilm-producing methicillin-resistant Staphylococcus epidermidis strain.</title>
        <authorList>
            <person name="Gill S.R."/>
            <person name="Fouts D.E."/>
            <person name="Archer G.L."/>
            <person name="Mongodin E.F."/>
            <person name="DeBoy R.T."/>
            <person name="Ravel J."/>
            <person name="Paulsen I.T."/>
            <person name="Kolonay J.F."/>
            <person name="Brinkac L.M."/>
            <person name="Beanan M.J."/>
            <person name="Dodson R.J."/>
            <person name="Daugherty S.C."/>
            <person name="Madupu R."/>
            <person name="Angiuoli S.V."/>
            <person name="Durkin A.S."/>
            <person name="Haft D.H."/>
            <person name="Vamathevan J.J."/>
            <person name="Khouri H."/>
            <person name="Utterback T.R."/>
            <person name="Lee C."/>
            <person name="Dimitrov G."/>
            <person name="Jiang L."/>
            <person name="Qin H."/>
            <person name="Weidman J."/>
            <person name="Tran K."/>
            <person name="Kang K.H."/>
            <person name="Hance I.R."/>
            <person name="Nelson K.E."/>
            <person name="Fraser C.M."/>
        </authorList>
    </citation>
    <scope>NUCLEOTIDE SEQUENCE [LARGE SCALE GENOMIC DNA]</scope>
    <source>
        <strain>ATCC 35984 / DSM 28319 / BCRC 17069 / CCUG 31568 / BM 3577 / RP62A</strain>
    </source>
</reference>
<dbReference type="EC" id="3.1.26.3" evidence="1"/>
<dbReference type="EMBL" id="CP000029">
    <property type="protein sequence ID" value="AAW54130.1"/>
    <property type="molecule type" value="Genomic_DNA"/>
</dbReference>
<dbReference type="RefSeq" id="WP_002446271.1">
    <property type="nucleotide sequence ID" value="NC_002976.3"/>
</dbReference>
<dbReference type="SMR" id="Q5HPV8"/>
<dbReference type="STRING" id="176279.SERP0799"/>
<dbReference type="KEGG" id="ser:SERP0799"/>
<dbReference type="eggNOG" id="COG0571">
    <property type="taxonomic scope" value="Bacteria"/>
</dbReference>
<dbReference type="HOGENOM" id="CLU_000907_1_3_9"/>
<dbReference type="Proteomes" id="UP000000531">
    <property type="component" value="Chromosome"/>
</dbReference>
<dbReference type="GO" id="GO:0005737">
    <property type="term" value="C:cytoplasm"/>
    <property type="evidence" value="ECO:0007669"/>
    <property type="project" value="UniProtKB-SubCell"/>
</dbReference>
<dbReference type="GO" id="GO:0003725">
    <property type="term" value="F:double-stranded RNA binding"/>
    <property type="evidence" value="ECO:0007669"/>
    <property type="project" value="TreeGrafter"/>
</dbReference>
<dbReference type="GO" id="GO:0046872">
    <property type="term" value="F:metal ion binding"/>
    <property type="evidence" value="ECO:0007669"/>
    <property type="project" value="UniProtKB-KW"/>
</dbReference>
<dbReference type="GO" id="GO:0004525">
    <property type="term" value="F:ribonuclease III activity"/>
    <property type="evidence" value="ECO:0007669"/>
    <property type="project" value="UniProtKB-UniRule"/>
</dbReference>
<dbReference type="GO" id="GO:0019843">
    <property type="term" value="F:rRNA binding"/>
    <property type="evidence" value="ECO:0007669"/>
    <property type="project" value="UniProtKB-KW"/>
</dbReference>
<dbReference type="GO" id="GO:0006397">
    <property type="term" value="P:mRNA processing"/>
    <property type="evidence" value="ECO:0007669"/>
    <property type="project" value="UniProtKB-UniRule"/>
</dbReference>
<dbReference type="GO" id="GO:0010468">
    <property type="term" value="P:regulation of gene expression"/>
    <property type="evidence" value="ECO:0007669"/>
    <property type="project" value="TreeGrafter"/>
</dbReference>
<dbReference type="GO" id="GO:0006364">
    <property type="term" value="P:rRNA processing"/>
    <property type="evidence" value="ECO:0007669"/>
    <property type="project" value="UniProtKB-UniRule"/>
</dbReference>
<dbReference type="GO" id="GO:0008033">
    <property type="term" value="P:tRNA processing"/>
    <property type="evidence" value="ECO:0007669"/>
    <property type="project" value="UniProtKB-KW"/>
</dbReference>
<dbReference type="CDD" id="cd10845">
    <property type="entry name" value="DSRM_RNAse_III_family"/>
    <property type="match status" value="1"/>
</dbReference>
<dbReference type="CDD" id="cd00593">
    <property type="entry name" value="RIBOc"/>
    <property type="match status" value="1"/>
</dbReference>
<dbReference type="FunFam" id="1.10.1520.10:FF:000001">
    <property type="entry name" value="Ribonuclease 3"/>
    <property type="match status" value="1"/>
</dbReference>
<dbReference type="FunFam" id="3.30.160.20:FF:000003">
    <property type="entry name" value="Ribonuclease 3"/>
    <property type="match status" value="1"/>
</dbReference>
<dbReference type="Gene3D" id="3.30.160.20">
    <property type="match status" value="1"/>
</dbReference>
<dbReference type="Gene3D" id="1.10.1520.10">
    <property type="entry name" value="Ribonuclease III domain"/>
    <property type="match status" value="1"/>
</dbReference>
<dbReference type="HAMAP" id="MF_00104">
    <property type="entry name" value="RNase_III"/>
    <property type="match status" value="1"/>
</dbReference>
<dbReference type="InterPro" id="IPR014720">
    <property type="entry name" value="dsRBD_dom"/>
</dbReference>
<dbReference type="InterPro" id="IPR011907">
    <property type="entry name" value="RNase_III"/>
</dbReference>
<dbReference type="InterPro" id="IPR000999">
    <property type="entry name" value="RNase_III_dom"/>
</dbReference>
<dbReference type="InterPro" id="IPR036389">
    <property type="entry name" value="RNase_III_sf"/>
</dbReference>
<dbReference type="NCBIfam" id="TIGR02191">
    <property type="entry name" value="RNaseIII"/>
    <property type="match status" value="1"/>
</dbReference>
<dbReference type="PANTHER" id="PTHR11207:SF0">
    <property type="entry name" value="RIBONUCLEASE 3"/>
    <property type="match status" value="1"/>
</dbReference>
<dbReference type="PANTHER" id="PTHR11207">
    <property type="entry name" value="RIBONUCLEASE III"/>
    <property type="match status" value="1"/>
</dbReference>
<dbReference type="Pfam" id="PF00035">
    <property type="entry name" value="dsrm"/>
    <property type="match status" value="1"/>
</dbReference>
<dbReference type="Pfam" id="PF14622">
    <property type="entry name" value="Ribonucleas_3_3"/>
    <property type="match status" value="1"/>
</dbReference>
<dbReference type="SMART" id="SM00358">
    <property type="entry name" value="DSRM"/>
    <property type="match status" value="1"/>
</dbReference>
<dbReference type="SMART" id="SM00535">
    <property type="entry name" value="RIBOc"/>
    <property type="match status" value="1"/>
</dbReference>
<dbReference type="SUPFAM" id="SSF54768">
    <property type="entry name" value="dsRNA-binding domain-like"/>
    <property type="match status" value="1"/>
</dbReference>
<dbReference type="SUPFAM" id="SSF69065">
    <property type="entry name" value="RNase III domain-like"/>
    <property type="match status" value="1"/>
</dbReference>
<dbReference type="PROSITE" id="PS50137">
    <property type="entry name" value="DS_RBD"/>
    <property type="match status" value="1"/>
</dbReference>
<dbReference type="PROSITE" id="PS00517">
    <property type="entry name" value="RNASE_3_1"/>
    <property type="match status" value="1"/>
</dbReference>
<dbReference type="PROSITE" id="PS50142">
    <property type="entry name" value="RNASE_3_2"/>
    <property type="match status" value="1"/>
</dbReference>
<feature type="chain" id="PRO_0000180439" description="Ribonuclease 3">
    <location>
        <begin position="1"/>
        <end position="245"/>
    </location>
</feature>
<feature type="domain" description="RNase III" evidence="1">
    <location>
        <begin position="17"/>
        <end position="146"/>
    </location>
</feature>
<feature type="domain" description="DRBM" evidence="1">
    <location>
        <begin position="172"/>
        <end position="241"/>
    </location>
</feature>
<feature type="active site" evidence="1">
    <location>
        <position position="63"/>
    </location>
</feature>
<feature type="active site" evidence="1">
    <location>
        <position position="135"/>
    </location>
</feature>
<feature type="binding site" evidence="1">
    <location>
        <position position="59"/>
    </location>
    <ligand>
        <name>Mg(2+)</name>
        <dbReference type="ChEBI" id="CHEBI:18420"/>
    </ligand>
</feature>
<feature type="binding site" evidence="1">
    <location>
        <position position="132"/>
    </location>
    <ligand>
        <name>Mg(2+)</name>
        <dbReference type="ChEBI" id="CHEBI:18420"/>
    </ligand>
</feature>
<feature type="binding site" evidence="1">
    <location>
        <position position="135"/>
    </location>
    <ligand>
        <name>Mg(2+)</name>
        <dbReference type="ChEBI" id="CHEBI:18420"/>
    </ligand>
</feature>
<name>RNC_STAEQ</name>
<organism>
    <name type="scientific">Staphylococcus epidermidis (strain ATCC 35984 / DSM 28319 / BCRC 17069 / CCUG 31568 / BM 3577 / RP62A)</name>
    <dbReference type="NCBI Taxonomy" id="176279"/>
    <lineage>
        <taxon>Bacteria</taxon>
        <taxon>Bacillati</taxon>
        <taxon>Bacillota</taxon>
        <taxon>Bacilli</taxon>
        <taxon>Bacillales</taxon>
        <taxon>Staphylococcaceae</taxon>
        <taxon>Staphylococcus</taxon>
    </lineage>
</organism>